<gene>
    <name evidence="1" type="primary">thiI</name>
    <name type="ordered locus">SPN23F08040</name>
</gene>
<organism>
    <name type="scientific">Streptococcus pneumoniae (strain ATCC 700669 / Spain 23F-1)</name>
    <dbReference type="NCBI Taxonomy" id="561276"/>
    <lineage>
        <taxon>Bacteria</taxon>
        <taxon>Bacillati</taxon>
        <taxon>Bacillota</taxon>
        <taxon>Bacilli</taxon>
        <taxon>Lactobacillales</taxon>
        <taxon>Streptococcaceae</taxon>
        <taxon>Streptococcus</taxon>
    </lineage>
</organism>
<proteinExistence type="inferred from homology"/>
<reference key="1">
    <citation type="journal article" date="2009" name="J. Bacteriol.">
        <title>Role of conjugative elements in the evolution of the multidrug-resistant pandemic clone Streptococcus pneumoniae Spain23F ST81.</title>
        <authorList>
            <person name="Croucher N.J."/>
            <person name="Walker D."/>
            <person name="Romero P."/>
            <person name="Lennard N."/>
            <person name="Paterson G.K."/>
            <person name="Bason N.C."/>
            <person name="Mitchell A.M."/>
            <person name="Quail M.A."/>
            <person name="Andrew P.W."/>
            <person name="Parkhill J."/>
            <person name="Bentley S.D."/>
            <person name="Mitchell T.J."/>
        </authorList>
    </citation>
    <scope>NUCLEOTIDE SEQUENCE [LARGE SCALE GENOMIC DNA]</scope>
    <source>
        <strain>ATCC 700669 / Spain 23F-1</strain>
    </source>
</reference>
<name>THII_STRPJ</name>
<keyword id="KW-0067">ATP-binding</keyword>
<keyword id="KW-0963">Cytoplasm</keyword>
<keyword id="KW-0547">Nucleotide-binding</keyword>
<keyword id="KW-0694">RNA-binding</keyword>
<keyword id="KW-0784">Thiamine biosynthesis</keyword>
<keyword id="KW-0808">Transferase</keyword>
<keyword id="KW-0820">tRNA-binding</keyword>
<feature type="chain" id="PRO_1000196934" description="Probable tRNA sulfurtransferase">
    <location>
        <begin position="1"/>
        <end position="404"/>
    </location>
</feature>
<feature type="domain" description="THUMP" evidence="1">
    <location>
        <begin position="60"/>
        <end position="165"/>
    </location>
</feature>
<feature type="binding site" evidence="1">
    <location>
        <begin position="183"/>
        <end position="184"/>
    </location>
    <ligand>
        <name>ATP</name>
        <dbReference type="ChEBI" id="CHEBI:30616"/>
    </ligand>
</feature>
<feature type="binding site" evidence="1">
    <location>
        <begin position="208"/>
        <end position="209"/>
    </location>
    <ligand>
        <name>ATP</name>
        <dbReference type="ChEBI" id="CHEBI:30616"/>
    </ligand>
</feature>
<feature type="binding site" evidence="1">
    <location>
        <position position="265"/>
    </location>
    <ligand>
        <name>ATP</name>
        <dbReference type="ChEBI" id="CHEBI:30616"/>
    </ligand>
</feature>
<feature type="binding site" evidence="1">
    <location>
        <position position="287"/>
    </location>
    <ligand>
        <name>ATP</name>
        <dbReference type="ChEBI" id="CHEBI:30616"/>
    </ligand>
</feature>
<feature type="binding site" evidence="1">
    <location>
        <position position="296"/>
    </location>
    <ligand>
        <name>ATP</name>
        <dbReference type="ChEBI" id="CHEBI:30616"/>
    </ligand>
</feature>
<dbReference type="EC" id="2.8.1.4" evidence="1"/>
<dbReference type="EMBL" id="FM211187">
    <property type="protein sequence ID" value="CAR68638.1"/>
    <property type="molecule type" value="Genomic_DNA"/>
</dbReference>
<dbReference type="RefSeq" id="WP_001200062.1">
    <property type="nucleotide sequence ID" value="NC_011900.1"/>
</dbReference>
<dbReference type="SMR" id="B8ZNS6"/>
<dbReference type="KEGG" id="sne:SPN23F08040"/>
<dbReference type="HOGENOM" id="CLU_037952_4_0_9"/>
<dbReference type="UniPathway" id="UPA00060"/>
<dbReference type="GO" id="GO:0005829">
    <property type="term" value="C:cytosol"/>
    <property type="evidence" value="ECO:0007669"/>
    <property type="project" value="TreeGrafter"/>
</dbReference>
<dbReference type="GO" id="GO:0005524">
    <property type="term" value="F:ATP binding"/>
    <property type="evidence" value="ECO:0007669"/>
    <property type="project" value="UniProtKB-UniRule"/>
</dbReference>
<dbReference type="GO" id="GO:0004810">
    <property type="term" value="F:CCA tRNA nucleotidyltransferase activity"/>
    <property type="evidence" value="ECO:0007669"/>
    <property type="project" value="InterPro"/>
</dbReference>
<dbReference type="GO" id="GO:0000049">
    <property type="term" value="F:tRNA binding"/>
    <property type="evidence" value="ECO:0007669"/>
    <property type="project" value="UniProtKB-UniRule"/>
</dbReference>
<dbReference type="GO" id="GO:0140741">
    <property type="term" value="F:tRNA-uracil-4 sulfurtransferase activity"/>
    <property type="evidence" value="ECO:0007669"/>
    <property type="project" value="UniProtKB-EC"/>
</dbReference>
<dbReference type="GO" id="GO:0009228">
    <property type="term" value="P:thiamine biosynthetic process"/>
    <property type="evidence" value="ECO:0007669"/>
    <property type="project" value="UniProtKB-KW"/>
</dbReference>
<dbReference type="GO" id="GO:0009229">
    <property type="term" value="P:thiamine diphosphate biosynthetic process"/>
    <property type="evidence" value="ECO:0007669"/>
    <property type="project" value="UniProtKB-UniRule"/>
</dbReference>
<dbReference type="GO" id="GO:0052837">
    <property type="term" value="P:thiazole biosynthetic process"/>
    <property type="evidence" value="ECO:0007669"/>
    <property type="project" value="TreeGrafter"/>
</dbReference>
<dbReference type="GO" id="GO:0002937">
    <property type="term" value="P:tRNA 4-thiouridine biosynthesis"/>
    <property type="evidence" value="ECO:0007669"/>
    <property type="project" value="TreeGrafter"/>
</dbReference>
<dbReference type="CDD" id="cd01712">
    <property type="entry name" value="PPase_ThiI"/>
    <property type="match status" value="1"/>
</dbReference>
<dbReference type="CDD" id="cd11716">
    <property type="entry name" value="THUMP_ThiI"/>
    <property type="match status" value="1"/>
</dbReference>
<dbReference type="FunFam" id="3.30.2130.30:FF:000006">
    <property type="entry name" value="Probable tRNA sulfurtransferase"/>
    <property type="match status" value="1"/>
</dbReference>
<dbReference type="FunFam" id="3.40.50.620:FF:000053">
    <property type="entry name" value="Probable tRNA sulfurtransferase"/>
    <property type="match status" value="1"/>
</dbReference>
<dbReference type="Gene3D" id="3.30.2130.30">
    <property type="match status" value="1"/>
</dbReference>
<dbReference type="Gene3D" id="3.40.50.620">
    <property type="entry name" value="HUPs"/>
    <property type="match status" value="1"/>
</dbReference>
<dbReference type="HAMAP" id="MF_00021">
    <property type="entry name" value="ThiI"/>
    <property type="match status" value="1"/>
</dbReference>
<dbReference type="InterPro" id="IPR014729">
    <property type="entry name" value="Rossmann-like_a/b/a_fold"/>
</dbReference>
<dbReference type="InterPro" id="IPR020536">
    <property type="entry name" value="ThiI_AANH"/>
</dbReference>
<dbReference type="InterPro" id="IPR054173">
    <property type="entry name" value="ThiI_fer"/>
</dbReference>
<dbReference type="InterPro" id="IPR049961">
    <property type="entry name" value="ThiI_N"/>
</dbReference>
<dbReference type="InterPro" id="IPR004114">
    <property type="entry name" value="THUMP_dom"/>
</dbReference>
<dbReference type="InterPro" id="IPR049962">
    <property type="entry name" value="THUMP_ThiI"/>
</dbReference>
<dbReference type="InterPro" id="IPR003720">
    <property type="entry name" value="tRNA_STrfase"/>
</dbReference>
<dbReference type="InterPro" id="IPR050102">
    <property type="entry name" value="tRNA_sulfurtransferase_ThiI"/>
</dbReference>
<dbReference type="NCBIfam" id="TIGR00342">
    <property type="entry name" value="tRNA uracil 4-sulfurtransferase ThiI"/>
    <property type="match status" value="1"/>
</dbReference>
<dbReference type="PANTHER" id="PTHR43209">
    <property type="entry name" value="TRNA SULFURTRANSFERASE"/>
    <property type="match status" value="1"/>
</dbReference>
<dbReference type="PANTHER" id="PTHR43209:SF1">
    <property type="entry name" value="TRNA SULFURTRANSFERASE"/>
    <property type="match status" value="1"/>
</dbReference>
<dbReference type="Pfam" id="PF02568">
    <property type="entry name" value="ThiI"/>
    <property type="match status" value="1"/>
</dbReference>
<dbReference type="Pfam" id="PF22025">
    <property type="entry name" value="ThiI_fer"/>
    <property type="match status" value="1"/>
</dbReference>
<dbReference type="Pfam" id="PF02926">
    <property type="entry name" value="THUMP"/>
    <property type="match status" value="1"/>
</dbReference>
<dbReference type="SMART" id="SM00981">
    <property type="entry name" value="THUMP"/>
    <property type="match status" value="1"/>
</dbReference>
<dbReference type="SUPFAM" id="SSF52402">
    <property type="entry name" value="Adenine nucleotide alpha hydrolases-like"/>
    <property type="match status" value="1"/>
</dbReference>
<dbReference type="SUPFAM" id="SSF143437">
    <property type="entry name" value="THUMP domain-like"/>
    <property type="match status" value="1"/>
</dbReference>
<dbReference type="PROSITE" id="PS51165">
    <property type="entry name" value="THUMP"/>
    <property type="match status" value="1"/>
</dbReference>
<accession>B8ZNS6</accession>
<comment type="function">
    <text evidence="1">Catalyzes the ATP-dependent transfer of a sulfur to tRNA to produce 4-thiouridine in position 8 of tRNAs, which functions as a near-UV photosensor. Also catalyzes the transfer of sulfur to the sulfur carrier protein ThiS, forming ThiS-thiocarboxylate. This is a step in the synthesis of thiazole, in the thiamine biosynthesis pathway. The sulfur is donated as persulfide by IscS.</text>
</comment>
<comment type="catalytic activity">
    <reaction evidence="1">
        <text>[ThiI sulfur-carrier protein]-S-sulfanyl-L-cysteine + a uridine in tRNA + 2 reduced [2Fe-2S]-[ferredoxin] + ATP + H(+) = [ThiI sulfur-carrier protein]-L-cysteine + a 4-thiouridine in tRNA + 2 oxidized [2Fe-2S]-[ferredoxin] + AMP + diphosphate</text>
        <dbReference type="Rhea" id="RHEA:24176"/>
        <dbReference type="Rhea" id="RHEA-COMP:10000"/>
        <dbReference type="Rhea" id="RHEA-COMP:10001"/>
        <dbReference type="Rhea" id="RHEA-COMP:13337"/>
        <dbReference type="Rhea" id="RHEA-COMP:13338"/>
        <dbReference type="Rhea" id="RHEA-COMP:13339"/>
        <dbReference type="Rhea" id="RHEA-COMP:13340"/>
        <dbReference type="ChEBI" id="CHEBI:15378"/>
        <dbReference type="ChEBI" id="CHEBI:29950"/>
        <dbReference type="ChEBI" id="CHEBI:30616"/>
        <dbReference type="ChEBI" id="CHEBI:33019"/>
        <dbReference type="ChEBI" id="CHEBI:33737"/>
        <dbReference type="ChEBI" id="CHEBI:33738"/>
        <dbReference type="ChEBI" id="CHEBI:61963"/>
        <dbReference type="ChEBI" id="CHEBI:65315"/>
        <dbReference type="ChEBI" id="CHEBI:136798"/>
        <dbReference type="ChEBI" id="CHEBI:456215"/>
        <dbReference type="EC" id="2.8.1.4"/>
    </reaction>
</comment>
<comment type="catalytic activity">
    <reaction evidence="1">
        <text>[ThiS sulfur-carrier protein]-C-terminal Gly-Gly-AMP + S-sulfanyl-L-cysteinyl-[cysteine desulfurase] + AH2 = [ThiS sulfur-carrier protein]-C-terminal-Gly-aminoethanethioate + L-cysteinyl-[cysteine desulfurase] + A + AMP + 2 H(+)</text>
        <dbReference type="Rhea" id="RHEA:43340"/>
        <dbReference type="Rhea" id="RHEA-COMP:12157"/>
        <dbReference type="Rhea" id="RHEA-COMP:12158"/>
        <dbReference type="Rhea" id="RHEA-COMP:12910"/>
        <dbReference type="Rhea" id="RHEA-COMP:19908"/>
        <dbReference type="ChEBI" id="CHEBI:13193"/>
        <dbReference type="ChEBI" id="CHEBI:15378"/>
        <dbReference type="ChEBI" id="CHEBI:17499"/>
        <dbReference type="ChEBI" id="CHEBI:29950"/>
        <dbReference type="ChEBI" id="CHEBI:61963"/>
        <dbReference type="ChEBI" id="CHEBI:90618"/>
        <dbReference type="ChEBI" id="CHEBI:232372"/>
        <dbReference type="ChEBI" id="CHEBI:456215"/>
    </reaction>
</comment>
<comment type="pathway">
    <text evidence="1">Cofactor biosynthesis; thiamine diphosphate biosynthesis.</text>
</comment>
<comment type="subcellular location">
    <subcellularLocation>
        <location evidence="1">Cytoplasm</location>
    </subcellularLocation>
</comment>
<comment type="similarity">
    <text evidence="1">Belongs to the ThiI family.</text>
</comment>
<sequence length="404" mass="45058">MQYSEIMIRYGELSTKGKNRMRFINKLRNNISDVLSIYPQVKVTADRDRAHAYLNGADYTAVAESLKQVFGIQNFSPVYKVEKSVEVLKSAVQEIMQDIYKEGMTFKISSKRSDHTFELDSRELNQTLGGAVFEAIPNVQAQMKSPDINLQVEIREEAAYLSYETVRGAGGLPVGTSGKGMLMLSGGIDSPVAGYLALKRGVDIEAVHFASPPYTSPGALKKAQDLTRKLTKFGGNIQFIEVPFTEIQEEIKAKAPEAYLMTLTRRFMMRITDRIREVRNGLVIINGESLGQVASQTLESMKAINAVTNTPIIRPVVTMDKLEIIDIAQEIDTFDISIQPFEDCCTIFAPDRPKTNPKIKNAEQYEARMDVEGLVERAVAGIMITEITPQAEKDEVDDLIDNLL</sequence>
<protein>
    <recommendedName>
        <fullName evidence="1">Probable tRNA sulfurtransferase</fullName>
        <ecNumber evidence="1">2.8.1.4</ecNumber>
    </recommendedName>
    <alternativeName>
        <fullName evidence="1">Sulfur carrier protein ThiS sulfurtransferase</fullName>
    </alternativeName>
    <alternativeName>
        <fullName evidence="1">Thiamine biosynthesis protein ThiI</fullName>
    </alternativeName>
    <alternativeName>
        <fullName evidence="1">tRNA 4-thiouridine synthase</fullName>
    </alternativeName>
</protein>
<evidence type="ECO:0000255" key="1">
    <source>
        <dbReference type="HAMAP-Rule" id="MF_00021"/>
    </source>
</evidence>